<organism>
    <name type="scientific">Dictyoglomus thermophilum (strain ATCC 35947 / DSM 3960 / H-6-12)</name>
    <dbReference type="NCBI Taxonomy" id="309799"/>
    <lineage>
        <taxon>Bacteria</taxon>
        <taxon>Pseudomonadati</taxon>
        <taxon>Dictyoglomota</taxon>
        <taxon>Dictyoglomia</taxon>
        <taxon>Dictyoglomales</taxon>
        <taxon>Dictyoglomaceae</taxon>
        <taxon>Dictyoglomus</taxon>
    </lineage>
</organism>
<gene>
    <name type="ordered locus">DICTH_1847</name>
</gene>
<proteinExistence type="inferred from homology"/>
<reference key="1">
    <citation type="journal article" date="2014" name="Genome Announc.">
        <title>Complete Genome Sequence of the Extreme Thermophile Dictyoglomus thermophilum H-6-12.</title>
        <authorList>
            <person name="Coil D.A."/>
            <person name="Badger J.H."/>
            <person name="Forberger H.C."/>
            <person name="Riggs F."/>
            <person name="Madupu R."/>
            <person name="Fedorova N."/>
            <person name="Ward N."/>
            <person name="Robb F.T."/>
            <person name="Eisen J.A."/>
        </authorList>
    </citation>
    <scope>NUCLEOTIDE SEQUENCE [LARGE SCALE GENOMIC DNA]</scope>
    <source>
        <strain>ATCC 35947 / DSM 3960 / H-6-12</strain>
    </source>
</reference>
<keyword id="KW-0997">Cell inner membrane</keyword>
<keyword id="KW-1003">Cell membrane</keyword>
<keyword id="KW-0472">Membrane</keyword>
<accession>B5YBN7</accession>
<feature type="chain" id="PRO_1000122636" description="Putative membrane protein insertion efficiency factor">
    <location>
        <begin position="1"/>
        <end position="85"/>
    </location>
</feature>
<name>YIDD_DICT6</name>
<evidence type="ECO:0000255" key="1">
    <source>
        <dbReference type="HAMAP-Rule" id="MF_00386"/>
    </source>
</evidence>
<protein>
    <recommendedName>
        <fullName evidence="1">Putative membrane protein insertion efficiency factor</fullName>
    </recommendedName>
</protein>
<comment type="function">
    <text evidence="1">Could be involved in insertion of integral membrane proteins into the membrane.</text>
</comment>
<comment type="subcellular location">
    <subcellularLocation>
        <location evidence="1">Cell inner membrane</location>
        <topology evidence="1">Peripheral membrane protein</topology>
        <orientation evidence="1">Cytoplasmic side</orientation>
    </subcellularLocation>
</comment>
<comment type="similarity">
    <text evidence="1">Belongs to the UPF0161 family.</text>
</comment>
<sequence>MRGLLIILIKFYKKFISPVLPKSCRFYPTCSTYALEAIERFGAFEGGILAIKRILRCHPFNPGGYDPVPTKEEFLELKLKRRKNK</sequence>
<dbReference type="EMBL" id="CP001146">
    <property type="protein sequence ID" value="ACI18777.1"/>
    <property type="molecule type" value="Genomic_DNA"/>
</dbReference>
<dbReference type="RefSeq" id="WP_012547409.1">
    <property type="nucleotide sequence ID" value="NC_011297.1"/>
</dbReference>
<dbReference type="STRING" id="309799.DICTH_1847"/>
<dbReference type="PaxDb" id="309799-DICTH_1847"/>
<dbReference type="KEGG" id="dth:DICTH_1847"/>
<dbReference type="eggNOG" id="COG0759">
    <property type="taxonomic scope" value="Bacteria"/>
</dbReference>
<dbReference type="HOGENOM" id="CLU_144811_6_0_0"/>
<dbReference type="OrthoDB" id="9801753at2"/>
<dbReference type="Proteomes" id="UP000001733">
    <property type="component" value="Chromosome"/>
</dbReference>
<dbReference type="GO" id="GO:0005886">
    <property type="term" value="C:plasma membrane"/>
    <property type="evidence" value="ECO:0007669"/>
    <property type="project" value="UniProtKB-SubCell"/>
</dbReference>
<dbReference type="HAMAP" id="MF_00386">
    <property type="entry name" value="UPF0161_YidD"/>
    <property type="match status" value="1"/>
</dbReference>
<dbReference type="InterPro" id="IPR002696">
    <property type="entry name" value="Membr_insert_effic_factor_YidD"/>
</dbReference>
<dbReference type="NCBIfam" id="TIGR00278">
    <property type="entry name" value="membrane protein insertion efficiency factor YidD"/>
    <property type="match status" value="1"/>
</dbReference>
<dbReference type="PANTHER" id="PTHR33383">
    <property type="entry name" value="MEMBRANE PROTEIN INSERTION EFFICIENCY FACTOR-RELATED"/>
    <property type="match status" value="1"/>
</dbReference>
<dbReference type="PANTHER" id="PTHR33383:SF1">
    <property type="entry name" value="MEMBRANE PROTEIN INSERTION EFFICIENCY FACTOR-RELATED"/>
    <property type="match status" value="1"/>
</dbReference>
<dbReference type="Pfam" id="PF01809">
    <property type="entry name" value="YidD"/>
    <property type="match status" value="1"/>
</dbReference>
<dbReference type="SMART" id="SM01234">
    <property type="entry name" value="Haemolytic"/>
    <property type="match status" value="1"/>
</dbReference>